<evidence type="ECO:0000250" key="1">
    <source>
        <dbReference type="UniProtKB" id="P29547"/>
    </source>
</evidence>
<evidence type="ECO:0000255" key="2">
    <source>
        <dbReference type="PROSITE-ProRule" id="PRU00519"/>
    </source>
</evidence>
<evidence type="ECO:0000256" key="3">
    <source>
        <dbReference type="SAM" id="MobiDB-lite"/>
    </source>
</evidence>
<evidence type="ECO:0000269" key="4">
    <source>
    </source>
</evidence>
<evidence type="ECO:0000269" key="5">
    <source>
    </source>
</evidence>
<evidence type="ECO:0000305" key="6"/>
<evidence type="ECO:0000312" key="7">
    <source>
        <dbReference type="WormBase" id="F17C11.9a"/>
    </source>
</evidence>
<evidence type="ECO:0000312" key="8">
    <source>
        <dbReference type="WormBase" id="F17C11.9b"/>
    </source>
</evidence>
<evidence type="ECO:0000312" key="9">
    <source>
        <dbReference type="WormBase" id="F17C11.9c"/>
    </source>
</evidence>
<comment type="function">
    <text evidence="1">Probably plays a role in anchoring the complex to other cellular components.</text>
</comment>
<comment type="subunit">
    <text evidence="6">EF-1 is composed of four subunits: alpha, beta, delta, and gamma.</text>
</comment>
<comment type="alternative products">
    <event type="alternative splicing"/>
    <isoform>
        <id>P54412-1</id>
        <name evidence="7">a</name>
        <sequence type="displayed"/>
    </isoform>
    <isoform>
        <id>P54412-2</id>
        <name evidence="8">b</name>
        <sequence type="described" ref="VSP_053653 VSP_053654"/>
    </isoform>
    <isoform>
        <id>P54412-3</id>
        <name evidence="9">c</name>
        <sequence type="described" ref="VSP_053655"/>
    </isoform>
</comment>
<comment type="PTM">
    <text evidence="5">AMPylated by fic-1.</text>
</comment>
<comment type="disruption phenotype">
    <text evidence="4">RNAi-mediated knockdown results in 100% sterility at 25 degrees Celsius.</text>
</comment>
<proteinExistence type="evidence at protein level"/>
<gene>
    <name evidence="7" type="primary">eef-1G</name>
    <name evidence="7" type="ORF">F17C11.9</name>
</gene>
<name>EF1G_CAEEL</name>
<reference key="1">
    <citation type="journal article" date="1998" name="Science">
        <title>Genome sequence of the nematode C. elegans: a platform for investigating biology.</title>
        <authorList>
            <consortium name="The C. elegans sequencing consortium"/>
        </authorList>
    </citation>
    <scope>NUCLEOTIDE SEQUENCE [LARGE SCALE GENOMIC DNA]</scope>
    <scope>ALTERNATIVE SPLICING</scope>
    <source>
        <strain>Bristol N2</strain>
    </source>
</reference>
<reference key="2">
    <citation type="journal article" date="2012" name="J. Proteomics">
        <title>Comparative proteomic analysis reveals differentially expressed proteins in Caenorhabditis elegans pgl-1 mutants grown at 20 degrees C and 25 degrees C.</title>
        <authorList>
            <person name="Tohsato Y."/>
            <person name="Monobe K."/>
            <person name="Suzuki K."/>
            <person name="Hayano T."/>
            <person name="Kawasaki I."/>
            <person name="Ito M."/>
        </authorList>
    </citation>
    <scope>IDENTIFICATION BY MASS SPECTROMETRY</scope>
    <scope>DISRUPTION PHENOTYPE</scope>
</reference>
<reference key="3">
    <citation type="journal article" date="2016" name="PLoS Genet.">
        <title>The Caenorhabditis elegans protein FIC-1 is an AMPylase that covalently modifies heat-shock 70 family proteins, translation elongation factors and histones.</title>
        <authorList>
            <person name="Truttmann M.C."/>
            <person name="Cruz V.E."/>
            <person name="Guo X."/>
            <person name="Engert C."/>
            <person name="Schwartz T.U."/>
            <person name="Ploegh H.L."/>
        </authorList>
    </citation>
    <scope>AMPYLATION</scope>
    <scope>IDENTIFICATION BY MASS SPECTROMETRY</scope>
</reference>
<accession>P54412</accession>
<accession>Q2PJ76</accession>
<accession>Q8I4K9</accession>
<keyword id="KW-0025">Alternative splicing</keyword>
<keyword id="KW-0251">Elongation factor</keyword>
<keyword id="KW-0648">Protein biosynthesis</keyword>
<keyword id="KW-1185">Reference proteome</keyword>
<feature type="chain" id="PRO_0000208823" description="Probable elongation factor 1-gamma">
    <location>
        <begin position="1"/>
        <end position="398"/>
    </location>
</feature>
<feature type="domain" description="GST C-terminal">
    <location>
        <begin position="66"/>
        <end position="199"/>
    </location>
</feature>
<feature type="domain" description="EF-1-gamma C-terminal" evidence="2">
    <location>
        <begin position="239"/>
        <end position="398"/>
    </location>
</feature>
<feature type="region of interest" description="Disordered" evidence="3">
    <location>
        <begin position="210"/>
        <end position="248"/>
    </location>
</feature>
<feature type="compositionally biased region" description="Basic and acidic residues" evidence="3">
    <location>
        <begin position="211"/>
        <end position="221"/>
    </location>
</feature>
<feature type="splice variant" id="VSP_053653" description="In isoform b." evidence="6">
    <location>
        <begin position="1"/>
        <end position="25"/>
    </location>
</feature>
<feature type="splice variant" id="VSP_053654" description="In isoform b." evidence="6">
    <original>KTVTLAGDAAPADKFPLGV</original>
    <variation>MLLQLTSSHLELYVLIYLD</variation>
    <location>
        <begin position="26"/>
        <end position="44"/>
    </location>
</feature>
<feature type="splice variant" id="VSP_053655" description="In isoform c." evidence="6">
    <location>
        <begin position="119"/>
        <end position="151"/>
    </location>
</feature>
<sequence>MTGKLYGNKDNFRTQKVLIAAKLANKTVTLAGDAAPADKFPLGVTPAFEGDALLFGAESIGLHLTGTSANAETVQWLQFAEGYLLPAVLGYVLPSVSAANFDKKTVEQYKNELNGQLQVLDRVLVKKTYLVGERLSLADVSVALDLLPAFQYVLDANARKSIVNVTRWFRTVVNQPAVKEVLGEVSLASSVAQFNQAKFTELSAKVAKSAPKAEKPKKEAKPAAAAAQPEDDEPKEEKSKDPFQDMPKGTFVLDNFKRSYSNEDTATKAIPHFWENFDADNWSIWKCEYKYPEDLTLAFMSCNLINGMYQRLEKLKKNAFASMILFGTDNNSTISGIWVWKGDKLAFELSPDWQVDYESYTWTKLDAKSDATKKEVNEYLMWEGDFGGKKFNQGKIFK</sequence>
<organism>
    <name type="scientific">Caenorhabditis elegans</name>
    <dbReference type="NCBI Taxonomy" id="6239"/>
    <lineage>
        <taxon>Eukaryota</taxon>
        <taxon>Metazoa</taxon>
        <taxon>Ecdysozoa</taxon>
        <taxon>Nematoda</taxon>
        <taxon>Chromadorea</taxon>
        <taxon>Rhabditida</taxon>
        <taxon>Rhabditina</taxon>
        <taxon>Rhabditomorpha</taxon>
        <taxon>Rhabditoidea</taxon>
        <taxon>Rhabditidae</taxon>
        <taxon>Peloderinae</taxon>
        <taxon>Caenorhabditis</taxon>
    </lineage>
</organism>
<dbReference type="EMBL" id="Z72507">
    <property type="protein sequence ID" value="CAA96631.1"/>
    <property type="molecule type" value="Genomic_DNA"/>
</dbReference>
<dbReference type="EMBL" id="Z72507">
    <property type="protein sequence ID" value="CAD56569.1"/>
    <property type="molecule type" value="Genomic_DNA"/>
</dbReference>
<dbReference type="EMBL" id="Z72507">
    <property type="protein sequence ID" value="CAJ55245.1"/>
    <property type="molecule type" value="Genomic_DNA"/>
</dbReference>
<dbReference type="PIR" id="T21061">
    <property type="entry name" value="T21061"/>
</dbReference>
<dbReference type="RefSeq" id="NP_001041100.1">
    <molecule id="P54412-3"/>
    <property type="nucleotide sequence ID" value="NM_001047635.7"/>
</dbReference>
<dbReference type="RefSeq" id="NP_001379321.1">
    <molecule id="P54412-2"/>
    <property type="nucleotide sequence ID" value="NM_001392606.1"/>
</dbReference>
<dbReference type="RefSeq" id="NP_505800.1">
    <molecule id="P54412-1"/>
    <property type="nucleotide sequence ID" value="NM_073399.7"/>
</dbReference>
<dbReference type="RefSeq" id="NP_872125.1">
    <property type="nucleotide sequence ID" value="NM_182325.6"/>
</dbReference>
<dbReference type="SMR" id="P54412"/>
<dbReference type="BioGRID" id="44550">
    <property type="interactions" value="58"/>
</dbReference>
<dbReference type="DIP" id="DIP-24841N"/>
<dbReference type="FunCoup" id="P54412">
    <property type="interactions" value="2456"/>
</dbReference>
<dbReference type="IntAct" id="P54412">
    <property type="interactions" value="5"/>
</dbReference>
<dbReference type="STRING" id="6239.F17C11.9a.1"/>
<dbReference type="PaxDb" id="6239-F17C11.9a"/>
<dbReference type="PeptideAtlas" id="P54412"/>
<dbReference type="EnsemblMetazoa" id="F17C11.9a.1">
    <molecule id="P54412-1"/>
    <property type="protein sequence ID" value="F17C11.9a.1"/>
    <property type="gene ID" value="WBGene00008920"/>
</dbReference>
<dbReference type="EnsemblMetazoa" id="F17C11.9b.1">
    <molecule id="P54412-2"/>
    <property type="protein sequence ID" value="F17C11.9b.1"/>
    <property type="gene ID" value="WBGene00008920"/>
</dbReference>
<dbReference type="EnsemblMetazoa" id="F17C11.9b.2">
    <molecule id="P54412-2"/>
    <property type="protein sequence ID" value="F17C11.9b.2"/>
    <property type="gene ID" value="WBGene00008920"/>
</dbReference>
<dbReference type="EnsemblMetazoa" id="F17C11.9b.3">
    <molecule id="P54412-2"/>
    <property type="protein sequence ID" value="F17C11.9b.3"/>
    <property type="gene ID" value="WBGene00008920"/>
</dbReference>
<dbReference type="EnsemblMetazoa" id="F17C11.9c.1">
    <molecule id="P54412-3"/>
    <property type="protein sequence ID" value="F17C11.9c.1"/>
    <property type="gene ID" value="WBGene00008920"/>
</dbReference>
<dbReference type="GeneID" id="179522"/>
<dbReference type="KEGG" id="cel:CELE_F17C11.9"/>
<dbReference type="UCSC" id="F17C11.9a">
    <property type="organism name" value="c. elegans"/>
</dbReference>
<dbReference type="AGR" id="WB:WBGene00008920"/>
<dbReference type="CTD" id="179522"/>
<dbReference type="WormBase" id="F17C11.9a">
    <molecule id="P54412-1"/>
    <property type="protein sequence ID" value="CE05656"/>
    <property type="gene ID" value="WBGene00008920"/>
    <property type="gene designation" value="eef-1G"/>
</dbReference>
<dbReference type="WormBase" id="F17C11.9b">
    <molecule id="P54412-2"/>
    <property type="protein sequence ID" value="CE32385"/>
    <property type="gene ID" value="WBGene00008920"/>
    <property type="gene designation" value="eef-1G"/>
</dbReference>
<dbReference type="WormBase" id="F17C11.9c">
    <molecule id="P54412-3"/>
    <property type="protein sequence ID" value="CE39492"/>
    <property type="gene ID" value="WBGene00008920"/>
    <property type="gene designation" value="eef-1G"/>
</dbReference>
<dbReference type="eggNOG" id="KOG0867">
    <property type="taxonomic scope" value="Eukaryota"/>
</dbReference>
<dbReference type="eggNOG" id="KOG1627">
    <property type="taxonomic scope" value="Eukaryota"/>
</dbReference>
<dbReference type="GeneTree" id="ENSGT00390000007552"/>
<dbReference type="InParanoid" id="P54412"/>
<dbReference type="OMA" id="TQYFSWT"/>
<dbReference type="OrthoDB" id="249703at2759"/>
<dbReference type="PhylomeDB" id="P54412"/>
<dbReference type="PRO" id="PR:P54412"/>
<dbReference type="Proteomes" id="UP000001940">
    <property type="component" value="Chromosome V"/>
</dbReference>
<dbReference type="Bgee" id="WBGene00008920">
    <property type="expression patterns" value="Expressed in adult organism and 3 other cell types or tissues"/>
</dbReference>
<dbReference type="GO" id="GO:0005737">
    <property type="term" value="C:cytoplasm"/>
    <property type="evidence" value="ECO:0000318"/>
    <property type="project" value="GO_Central"/>
</dbReference>
<dbReference type="GO" id="GO:0005634">
    <property type="term" value="C:nucleus"/>
    <property type="evidence" value="ECO:0000318"/>
    <property type="project" value="GO_Central"/>
</dbReference>
<dbReference type="GO" id="GO:0003746">
    <property type="term" value="F:translation elongation factor activity"/>
    <property type="evidence" value="ECO:0007669"/>
    <property type="project" value="UniProtKB-KW"/>
</dbReference>
<dbReference type="GO" id="GO:0006414">
    <property type="term" value="P:translational elongation"/>
    <property type="evidence" value="ECO:0000318"/>
    <property type="project" value="GO_Central"/>
</dbReference>
<dbReference type="CDD" id="cd03181">
    <property type="entry name" value="GST_C_EF1Bgamma_like"/>
    <property type="match status" value="1"/>
</dbReference>
<dbReference type="CDD" id="cd03044">
    <property type="entry name" value="GST_N_EF1Bgamma"/>
    <property type="match status" value="1"/>
</dbReference>
<dbReference type="FunFam" id="1.20.1050.10:FF:000006">
    <property type="entry name" value="Elongation factor 1 gamma"/>
    <property type="match status" value="1"/>
</dbReference>
<dbReference type="FunFam" id="3.30.70.1010:FF:000001">
    <property type="entry name" value="Elongation factor 1-gamma 1"/>
    <property type="match status" value="1"/>
</dbReference>
<dbReference type="Gene3D" id="1.20.1050.10">
    <property type="match status" value="1"/>
</dbReference>
<dbReference type="Gene3D" id="3.30.70.1010">
    <property type="entry name" value="Translation elongation factor EF1B, gamma chain, conserved domain"/>
    <property type="match status" value="1"/>
</dbReference>
<dbReference type="InterPro" id="IPR050802">
    <property type="entry name" value="EF-GSTs"/>
</dbReference>
<dbReference type="InterPro" id="IPR001662">
    <property type="entry name" value="EF1B_G_C"/>
</dbReference>
<dbReference type="InterPro" id="IPR036433">
    <property type="entry name" value="EF1B_G_C_sf"/>
</dbReference>
<dbReference type="InterPro" id="IPR010987">
    <property type="entry name" value="Glutathione-S-Trfase_C-like"/>
</dbReference>
<dbReference type="InterPro" id="IPR036282">
    <property type="entry name" value="Glutathione-S-Trfase_C_sf"/>
</dbReference>
<dbReference type="InterPro" id="IPR004046">
    <property type="entry name" value="GST_C"/>
</dbReference>
<dbReference type="PANTHER" id="PTHR43986">
    <property type="entry name" value="ELONGATION FACTOR 1-GAMMA"/>
    <property type="match status" value="1"/>
</dbReference>
<dbReference type="PANTHER" id="PTHR43986:SF1">
    <property type="entry name" value="ELONGATION FACTOR 1-GAMMA"/>
    <property type="match status" value="1"/>
</dbReference>
<dbReference type="Pfam" id="PF00647">
    <property type="entry name" value="EF1G"/>
    <property type="match status" value="1"/>
</dbReference>
<dbReference type="Pfam" id="PF00043">
    <property type="entry name" value="GST_C"/>
    <property type="match status" value="1"/>
</dbReference>
<dbReference type="SMART" id="SM01183">
    <property type="entry name" value="EF1G"/>
    <property type="match status" value="1"/>
</dbReference>
<dbReference type="SUPFAM" id="SSF89942">
    <property type="entry name" value="eEF1-gamma domain"/>
    <property type="match status" value="1"/>
</dbReference>
<dbReference type="SUPFAM" id="SSF47616">
    <property type="entry name" value="GST C-terminal domain-like"/>
    <property type="match status" value="1"/>
</dbReference>
<dbReference type="PROSITE" id="PS50040">
    <property type="entry name" value="EF1G_C"/>
    <property type="match status" value="1"/>
</dbReference>
<dbReference type="PROSITE" id="PS50405">
    <property type="entry name" value="GST_CTER"/>
    <property type="match status" value="1"/>
</dbReference>
<protein>
    <recommendedName>
        <fullName>Probable elongation factor 1-gamma</fullName>
        <shortName>EF-1-gamma</shortName>
    </recommendedName>
    <alternativeName>
        <fullName>eEF-1B gamma</fullName>
    </alternativeName>
</protein>